<proteinExistence type="inferred from homology"/>
<comment type="function">
    <text evidence="1">Plays a central role in 2-thiolation of mcm(5)S(2)U at tRNA wobble positions of tRNA(Lys), tRNA(Glu) and tRNA(Gln). May act by forming a heterodimer with NCS6 that ligates sulfur from thiocarboxylated URM1 onto the uridine of tRNAs at wobble position. Prior mcm(5) tRNA modification by the elongator complex is required for 2-thiolation. May also be involved in protein urmylation.</text>
</comment>
<comment type="pathway">
    <text evidence="1">tRNA modification; 5-methoxycarbonylmethyl-2-thiouridine-tRNA biosynthesis.</text>
</comment>
<comment type="subcellular location">
    <subcellularLocation>
        <location evidence="1">Cytoplasm</location>
    </subcellularLocation>
</comment>
<comment type="similarity">
    <text evidence="1">Belongs to the CTU2/NCS2 family.</text>
</comment>
<protein>
    <recommendedName>
        <fullName evidence="1">Cytoplasmic tRNA 2-thiolation protein 2</fullName>
    </recommendedName>
</protein>
<accession>Q0UDH1</accession>
<gene>
    <name evidence="1" type="primary">NCS2</name>
    <name evidence="1" type="synonym">CTU2</name>
    <name type="ORF">SNOG_10193</name>
</gene>
<dbReference type="EMBL" id="CH445340">
    <property type="protein sequence ID" value="EAT82528.1"/>
    <property type="molecule type" value="Genomic_DNA"/>
</dbReference>
<dbReference type="RefSeq" id="XP_001800475.1">
    <property type="nucleotide sequence ID" value="XM_001800423.1"/>
</dbReference>
<dbReference type="SMR" id="Q0UDH1"/>
<dbReference type="FunCoup" id="Q0UDH1">
    <property type="interactions" value="162"/>
</dbReference>
<dbReference type="STRING" id="321614.Q0UDH1"/>
<dbReference type="EnsemblFungi" id="SNOT_10193">
    <property type="protein sequence ID" value="SNOT_10193"/>
    <property type="gene ID" value="SNOG_10193"/>
</dbReference>
<dbReference type="GeneID" id="5977381"/>
<dbReference type="KEGG" id="pno:SNOG_10193"/>
<dbReference type="VEuPathDB" id="FungiDB:JI435_101930"/>
<dbReference type="eggNOG" id="KOG2594">
    <property type="taxonomic scope" value="Eukaryota"/>
</dbReference>
<dbReference type="HOGENOM" id="CLU_024534_3_0_1"/>
<dbReference type="InParanoid" id="Q0UDH1"/>
<dbReference type="OMA" id="KQRKQMM"/>
<dbReference type="OrthoDB" id="25129at2759"/>
<dbReference type="UniPathway" id="UPA00988"/>
<dbReference type="Proteomes" id="UP000001055">
    <property type="component" value="Unassembled WGS sequence"/>
</dbReference>
<dbReference type="GO" id="GO:0005829">
    <property type="term" value="C:cytosol"/>
    <property type="evidence" value="ECO:0000250"/>
    <property type="project" value="UniProtKB"/>
</dbReference>
<dbReference type="GO" id="GO:0016779">
    <property type="term" value="F:nucleotidyltransferase activity"/>
    <property type="evidence" value="ECO:0007669"/>
    <property type="project" value="UniProtKB-UniRule"/>
</dbReference>
<dbReference type="GO" id="GO:0016783">
    <property type="term" value="F:sulfurtransferase activity"/>
    <property type="evidence" value="ECO:0000318"/>
    <property type="project" value="GO_Central"/>
</dbReference>
<dbReference type="GO" id="GO:0000049">
    <property type="term" value="F:tRNA binding"/>
    <property type="evidence" value="ECO:0007669"/>
    <property type="project" value="InterPro"/>
</dbReference>
<dbReference type="GO" id="GO:0032447">
    <property type="term" value="P:protein urmylation"/>
    <property type="evidence" value="ECO:0007669"/>
    <property type="project" value="UniProtKB-UniRule"/>
</dbReference>
<dbReference type="GO" id="GO:0034227">
    <property type="term" value="P:tRNA thio-modification"/>
    <property type="evidence" value="ECO:0000250"/>
    <property type="project" value="UniProtKB"/>
</dbReference>
<dbReference type="GO" id="GO:0002143">
    <property type="term" value="P:tRNA wobble position uridine thiolation"/>
    <property type="evidence" value="ECO:0000318"/>
    <property type="project" value="GO_Central"/>
</dbReference>
<dbReference type="GO" id="GO:0002098">
    <property type="term" value="P:tRNA wobble uridine modification"/>
    <property type="evidence" value="ECO:0000250"/>
    <property type="project" value="UniProtKB"/>
</dbReference>
<dbReference type="Gene3D" id="3.40.50.620">
    <property type="entry name" value="HUPs"/>
    <property type="match status" value="1"/>
</dbReference>
<dbReference type="HAMAP" id="MF_03054">
    <property type="entry name" value="CTU2"/>
    <property type="match status" value="1"/>
</dbReference>
<dbReference type="InterPro" id="IPR019407">
    <property type="entry name" value="CTU2"/>
</dbReference>
<dbReference type="InterPro" id="IPR014729">
    <property type="entry name" value="Rossmann-like_a/b/a_fold"/>
</dbReference>
<dbReference type="PANTHER" id="PTHR20882">
    <property type="entry name" value="CYTOPLASMIC TRNA 2-THIOLATION PROTEIN 2"/>
    <property type="match status" value="1"/>
</dbReference>
<dbReference type="PANTHER" id="PTHR20882:SF14">
    <property type="entry name" value="CYTOPLASMIC TRNA 2-THIOLATION PROTEIN 2"/>
    <property type="match status" value="1"/>
</dbReference>
<dbReference type="Pfam" id="PF10288">
    <property type="entry name" value="CTU2"/>
    <property type="match status" value="1"/>
</dbReference>
<dbReference type="SUPFAM" id="SSF52402">
    <property type="entry name" value="Adenine nucleotide alpha hydrolases-like"/>
    <property type="match status" value="1"/>
</dbReference>
<reference key="1">
    <citation type="journal article" date="2007" name="Plant Cell">
        <title>Dothideomycete-plant interactions illuminated by genome sequencing and EST analysis of the wheat pathogen Stagonospora nodorum.</title>
        <authorList>
            <person name="Hane J.K."/>
            <person name="Lowe R.G.T."/>
            <person name="Solomon P.S."/>
            <person name="Tan K.-C."/>
            <person name="Schoch C.L."/>
            <person name="Spatafora J.W."/>
            <person name="Crous P.W."/>
            <person name="Kodira C.D."/>
            <person name="Birren B.W."/>
            <person name="Galagan J.E."/>
            <person name="Torriani S.F.F."/>
            <person name="McDonald B.A."/>
            <person name="Oliver R.P."/>
        </authorList>
    </citation>
    <scope>NUCLEOTIDE SEQUENCE [LARGE SCALE GENOMIC DNA]</scope>
    <source>
        <strain>SN15 / ATCC MYA-4574 / FGSC 10173</strain>
    </source>
</reference>
<keyword id="KW-0963">Cytoplasm</keyword>
<keyword id="KW-0819">tRNA processing</keyword>
<sequence length="382" mass="41720">MPGKHSDSATSELCEKCKENISILVVRAKPICHDCFARYVHTKAIKRLESFRVNFAASPDQQRKILLPLSHGVSSTTLLHILDLHLNTQRSKTNRTGFAISVLVVDEGSLDPARLDKVRERYANHDYASLPLHDVFRLLPDDASLRAFLPESQVQEVCSTQEQLTSLIASLTSATARADVLTTLRTRLIVEHAKQTGCESILWGDSTTRLAEKTLAETAKGRGFSLPWQISDGKSPFDINFHYPLRDVLKKELFSYVDLAEPALSALVYEPQSGATQASMSSKNTTIDDLMKQYFESVEENFPSIVSNVVRTTGKLEVPTGATSNPRCSLCGMPVPDGRFGIHGWGGDQHGGADDAAAVSGGSLCYGCTRSIPQRGTAVASK</sequence>
<feature type="chain" id="PRO_0000369299" description="Cytoplasmic tRNA 2-thiolation protein 2">
    <location>
        <begin position="1"/>
        <end position="382"/>
    </location>
</feature>
<organism>
    <name type="scientific">Phaeosphaeria nodorum (strain SN15 / ATCC MYA-4574 / FGSC 10173)</name>
    <name type="common">Glume blotch fungus</name>
    <name type="synonym">Parastagonospora nodorum</name>
    <dbReference type="NCBI Taxonomy" id="321614"/>
    <lineage>
        <taxon>Eukaryota</taxon>
        <taxon>Fungi</taxon>
        <taxon>Dikarya</taxon>
        <taxon>Ascomycota</taxon>
        <taxon>Pezizomycotina</taxon>
        <taxon>Dothideomycetes</taxon>
        <taxon>Pleosporomycetidae</taxon>
        <taxon>Pleosporales</taxon>
        <taxon>Pleosporineae</taxon>
        <taxon>Phaeosphaeriaceae</taxon>
        <taxon>Parastagonospora</taxon>
    </lineage>
</organism>
<name>CTU2_PHANO</name>
<evidence type="ECO:0000255" key="1">
    <source>
        <dbReference type="HAMAP-Rule" id="MF_03054"/>
    </source>
</evidence>